<dbReference type="EC" id="4.2.1.11" evidence="1"/>
<dbReference type="EMBL" id="CP000713">
    <property type="protein sequence ID" value="ABQ94604.1"/>
    <property type="molecule type" value="Genomic_DNA"/>
</dbReference>
<dbReference type="SMR" id="A5WG13"/>
<dbReference type="STRING" id="349106.PsycPRwf_1664"/>
<dbReference type="KEGG" id="prw:PsycPRwf_1664"/>
<dbReference type="eggNOG" id="COG0148">
    <property type="taxonomic scope" value="Bacteria"/>
</dbReference>
<dbReference type="HOGENOM" id="CLU_031223_2_1_6"/>
<dbReference type="UniPathway" id="UPA00109">
    <property type="reaction ID" value="UER00187"/>
</dbReference>
<dbReference type="GO" id="GO:0009986">
    <property type="term" value="C:cell surface"/>
    <property type="evidence" value="ECO:0007669"/>
    <property type="project" value="UniProtKB-SubCell"/>
</dbReference>
<dbReference type="GO" id="GO:0005576">
    <property type="term" value="C:extracellular region"/>
    <property type="evidence" value="ECO:0007669"/>
    <property type="project" value="UniProtKB-SubCell"/>
</dbReference>
<dbReference type="GO" id="GO:0000015">
    <property type="term" value="C:phosphopyruvate hydratase complex"/>
    <property type="evidence" value="ECO:0007669"/>
    <property type="project" value="InterPro"/>
</dbReference>
<dbReference type="GO" id="GO:0000287">
    <property type="term" value="F:magnesium ion binding"/>
    <property type="evidence" value="ECO:0007669"/>
    <property type="project" value="UniProtKB-UniRule"/>
</dbReference>
<dbReference type="GO" id="GO:0004634">
    <property type="term" value="F:phosphopyruvate hydratase activity"/>
    <property type="evidence" value="ECO:0007669"/>
    <property type="project" value="UniProtKB-UniRule"/>
</dbReference>
<dbReference type="GO" id="GO:0006096">
    <property type="term" value="P:glycolytic process"/>
    <property type="evidence" value="ECO:0007669"/>
    <property type="project" value="UniProtKB-UniRule"/>
</dbReference>
<dbReference type="CDD" id="cd03313">
    <property type="entry name" value="enolase"/>
    <property type="match status" value="1"/>
</dbReference>
<dbReference type="FunFam" id="3.20.20.120:FF:000001">
    <property type="entry name" value="Enolase"/>
    <property type="match status" value="1"/>
</dbReference>
<dbReference type="FunFam" id="3.30.390.10:FF:000001">
    <property type="entry name" value="Enolase"/>
    <property type="match status" value="1"/>
</dbReference>
<dbReference type="Gene3D" id="3.20.20.120">
    <property type="entry name" value="Enolase-like C-terminal domain"/>
    <property type="match status" value="1"/>
</dbReference>
<dbReference type="Gene3D" id="3.30.390.10">
    <property type="entry name" value="Enolase-like, N-terminal domain"/>
    <property type="match status" value="1"/>
</dbReference>
<dbReference type="HAMAP" id="MF_00318">
    <property type="entry name" value="Enolase"/>
    <property type="match status" value="1"/>
</dbReference>
<dbReference type="InterPro" id="IPR000941">
    <property type="entry name" value="Enolase"/>
</dbReference>
<dbReference type="InterPro" id="IPR036849">
    <property type="entry name" value="Enolase-like_C_sf"/>
</dbReference>
<dbReference type="InterPro" id="IPR029017">
    <property type="entry name" value="Enolase-like_N"/>
</dbReference>
<dbReference type="InterPro" id="IPR020810">
    <property type="entry name" value="Enolase_C"/>
</dbReference>
<dbReference type="InterPro" id="IPR020809">
    <property type="entry name" value="Enolase_CS"/>
</dbReference>
<dbReference type="InterPro" id="IPR020811">
    <property type="entry name" value="Enolase_N"/>
</dbReference>
<dbReference type="NCBIfam" id="TIGR01060">
    <property type="entry name" value="eno"/>
    <property type="match status" value="1"/>
</dbReference>
<dbReference type="PANTHER" id="PTHR11902">
    <property type="entry name" value="ENOLASE"/>
    <property type="match status" value="1"/>
</dbReference>
<dbReference type="PANTHER" id="PTHR11902:SF1">
    <property type="entry name" value="ENOLASE"/>
    <property type="match status" value="1"/>
</dbReference>
<dbReference type="Pfam" id="PF00113">
    <property type="entry name" value="Enolase_C"/>
    <property type="match status" value="1"/>
</dbReference>
<dbReference type="Pfam" id="PF03952">
    <property type="entry name" value="Enolase_N"/>
    <property type="match status" value="1"/>
</dbReference>
<dbReference type="PIRSF" id="PIRSF001400">
    <property type="entry name" value="Enolase"/>
    <property type="match status" value="1"/>
</dbReference>
<dbReference type="PRINTS" id="PR00148">
    <property type="entry name" value="ENOLASE"/>
</dbReference>
<dbReference type="SFLD" id="SFLDF00002">
    <property type="entry name" value="enolase"/>
    <property type="match status" value="1"/>
</dbReference>
<dbReference type="SFLD" id="SFLDG00178">
    <property type="entry name" value="enolase"/>
    <property type="match status" value="1"/>
</dbReference>
<dbReference type="SMART" id="SM01192">
    <property type="entry name" value="Enolase_C"/>
    <property type="match status" value="1"/>
</dbReference>
<dbReference type="SMART" id="SM01193">
    <property type="entry name" value="Enolase_N"/>
    <property type="match status" value="1"/>
</dbReference>
<dbReference type="SUPFAM" id="SSF51604">
    <property type="entry name" value="Enolase C-terminal domain-like"/>
    <property type="match status" value="1"/>
</dbReference>
<dbReference type="SUPFAM" id="SSF54826">
    <property type="entry name" value="Enolase N-terminal domain-like"/>
    <property type="match status" value="1"/>
</dbReference>
<dbReference type="PROSITE" id="PS00164">
    <property type="entry name" value="ENOLASE"/>
    <property type="match status" value="1"/>
</dbReference>
<name>ENO_PSYWF</name>
<protein>
    <recommendedName>
        <fullName evidence="1">Enolase</fullName>
        <ecNumber evidence="1">4.2.1.11</ecNumber>
    </recommendedName>
    <alternativeName>
        <fullName evidence="1">2-phospho-D-glycerate hydro-lyase</fullName>
    </alternativeName>
    <alternativeName>
        <fullName evidence="1">2-phosphoglycerate dehydratase</fullName>
    </alternativeName>
</protein>
<reference key="1">
    <citation type="submission" date="2007-05" db="EMBL/GenBank/DDBJ databases">
        <title>Complete sequence of chromosome of Psychrobacter sp. PRwf-1.</title>
        <authorList>
            <consortium name="US DOE Joint Genome Institute"/>
            <person name="Copeland A."/>
            <person name="Lucas S."/>
            <person name="Lapidus A."/>
            <person name="Barry K."/>
            <person name="Detter J.C."/>
            <person name="Glavina del Rio T."/>
            <person name="Hammon N."/>
            <person name="Israni S."/>
            <person name="Dalin E."/>
            <person name="Tice H."/>
            <person name="Pitluck S."/>
            <person name="Chain P."/>
            <person name="Malfatti S."/>
            <person name="Shin M."/>
            <person name="Vergez L."/>
            <person name="Schmutz J."/>
            <person name="Larimer F."/>
            <person name="Land M."/>
            <person name="Hauser L."/>
            <person name="Kyrpides N."/>
            <person name="Kim E."/>
            <person name="Tiedje J."/>
            <person name="Richardson P."/>
        </authorList>
    </citation>
    <scope>NUCLEOTIDE SEQUENCE [LARGE SCALE GENOMIC DNA]</scope>
    <source>
        <strain>PRwf-1</strain>
    </source>
</reference>
<gene>
    <name evidence="1" type="primary">eno</name>
    <name type="ordered locus">PsycPRwf_1664</name>
</gene>
<feature type="chain" id="PRO_1000072011" description="Enolase">
    <location>
        <begin position="1"/>
        <end position="438"/>
    </location>
</feature>
<feature type="active site" description="Proton donor" evidence="1">
    <location>
        <position position="216"/>
    </location>
</feature>
<feature type="active site" description="Proton acceptor" evidence="1">
    <location>
        <position position="349"/>
    </location>
</feature>
<feature type="binding site" evidence="1">
    <location>
        <position position="174"/>
    </location>
    <ligand>
        <name>(2R)-2-phosphoglycerate</name>
        <dbReference type="ChEBI" id="CHEBI:58289"/>
    </ligand>
</feature>
<feature type="binding site" evidence="1">
    <location>
        <position position="253"/>
    </location>
    <ligand>
        <name>Mg(2+)</name>
        <dbReference type="ChEBI" id="CHEBI:18420"/>
    </ligand>
</feature>
<feature type="binding site" evidence="1">
    <location>
        <position position="297"/>
    </location>
    <ligand>
        <name>Mg(2+)</name>
        <dbReference type="ChEBI" id="CHEBI:18420"/>
    </ligand>
</feature>
<feature type="binding site" evidence="1">
    <location>
        <position position="324"/>
    </location>
    <ligand>
        <name>Mg(2+)</name>
        <dbReference type="ChEBI" id="CHEBI:18420"/>
    </ligand>
</feature>
<feature type="binding site" evidence="1">
    <location>
        <position position="349"/>
    </location>
    <ligand>
        <name>(2R)-2-phosphoglycerate</name>
        <dbReference type="ChEBI" id="CHEBI:58289"/>
    </ligand>
</feature>
<feature type="binding site" evidence="1">
    <location>
        <position position="378"/>
    </location>
    <ligand>
        <name>(2R)-2-phosphoglycerate</name>
        <dbReference type="ChEBI" id="CHEBI:58289"/>
    </ligand>
</feature>
<feature type="binding site" evidence="1">
    <location>
        <position position="379"/>
    </location>
    <ligand>
        <name>(2R)-2-phosphoglycerate</name>
        <dbReference type="ChEBI" id="CHEBI:58289"/>
    </ligand>
</feature>
<feature type="binding site" evidence="1">
    <location>
        <position position="400"/>
    </location>
    <ligand>
        <name>(2R)-2-phosphoglycerate</name>
        <dbReference type="ChEBI" id="CHEBI:58289"/>
    </ligand>
</feature>
<evidence type="ECO:0000255" key="1">
    <source>
        <dbReference type="HAMAP-Rule" id="MF_00318"/>
    </source>
</evidence>
<keyword id="KW-0963">Cytoplasm</keyword>
<keyword id="KW-0324">Glycolysis</keyword>
<keyword id="KW-0456">Lyase</keyword>
<keyword id="KW-0460">Magnesium</keyword>
<keyword id="KW-0479">Metal-binding</keyword>
<keyword id="KW-0964">Secreted</keyword>
<organism>
    <name type="scientific">Psychrobacter sp. (strain PRwf-1)</name>
    <dbReference type="NCBI Taxonomy" id="349106"/>
    <lineage>
        <taxon>Bacteria</taxon>
        <taxon>Pseudomonadati</taxon>
        <taxon>Pseudomonadota</taxon>
        <taxon>Gammaproteobacteria</taxon>
        <taxon>Moraxellales</taxon>
        <taxon>Moraxellaceae</taxon>
        <taxon>Psychrobacter</taxon>
    </lineage>
</organism>
<accession>A5WG13</accession>
<proteinExistence type="inferred from homology"/>
<sequence>MYAENITNAVEIQDIRAREILDSRGNPTIEADVILADGSMGRAAAPSGASTGSREALELRDGDKSRYLGKGVTKAVANVNSQIRSALLESDATDQQGIDNILIELDGTANKDHLGANAMLAVSLATAKAAAISQNLPLHQYIANLRGQTSLTMPVPMMNILNGGEHADNTVDIQEFMIEPTGFSSFSEALRAGVEIFHSLKSVLKSQGLNTAVGDEGGFAPNLRTNEEAITVIMQAIEQAGYKAGKDIHLALDCAASEFYKNGQYILAGEGNKTFDSQGFSDYLVKLTEQYPIISIEDGLDESDWEGWAYLTSKLGKKVQLVGDDLFVTNPAILQEGIDKQIANAILIKFNQIGTLSETLDAIYLAKKNGYATVISHRSGETEDSTIADLAVGTAAGQIKTGSLCRSDRVAKYNQLLRIEQQVRASYRGGEEFIGLRG</sequence>
<comment type="function">
    <text evidence="1">Catalyzes the reversible conversion of 2-phosphoglycerate (2-PG) into phosphoenolpyruvate (PEP). It is essential for the degradation of carbohydrates via glycolysis.</text>
</comment>
<comment type="catalytic activity">
    <reaction evidence="1">
        <text>(2R)-2-phosphoglycerate = phosphoenolpyruvate + H2O</text>
        <dbReference type="Rhea" id="RHEA:10164"/>
        <dbReference type="ChEBI" id="CHEBI:15377"/>
        <dbReference type="ChEBI" id="CHEBI:58289"/>
        <dbReference type="ChEBI" id="CHEBI:58702"/>
        <dbReference type="EC" id="4.2.1.11"/>
    </reaction>
</comment>
<comment type="cofactor">
    <cofactor evidence="1">
        <name>Mg(2+)</name>
        <dbReference type="ChEBI" id="CHEBI:18420"/>
    </cofactor>
    <text evidence="1">Binds a second Mg(2+) ion via substrate during catalysis.</text>
</comment>
<comment type="pathway">
    <text evidence="1">Carbohydrate degradation; glycolysis; pyruvate from D-glyceraldehyde 3-phosphate: step 4/5.</text>
</comment>
<comment type="subunit">
    <text evidence="1">Component of the RNA degradosome, a multiprotein complex involved in RNA processing and mRNA degradation.</text>
</comment>
<comment type="subcellular location">
    <subcellularLocation>
        <location evidence="1">Cytoplasm</location>
    </subcellularLocation>
    <subcellularLocation>
        <location evidence="1">Secreted</location>
    </subcellularLocation>
    <subcellularLocation>
        <location evidence="1">Cell surface</location>
    </subcellularLocation>
    <text evidence="1">Fractions of enolase are present in both the cytoplasm and on the cell surface.</text>
</comment>
<comment type="similarity">
    <text evidence="1">Belongs to the enolase family.</text>
</comment>